<organism>
    <name type="scientific">Caenorhabditis elegans</name>
    <dbReference type="NCBI Taxonomy" id="6239"/>
    <lineage>
        <taxon>Eukaryota</taxon>
        <taxon>Metazoa</taxon>
        <taxon>Ecdysozoa</taxon>
        <taxon>Nematoda</taxon>
        <taxon>Chromadorea</taxon>
        <taxon>Rhabditida</taxon>
        <taxon>Rhabditina</taxon>
        <taxon>Rhabditomorpha</taxon>
        <taxon>Rhabditoidea</taxon>
        <taxon>Rhabditidae</taxon>
        <taxon>Peloderinae</taxon>
        <taxon>Caenorhabditis</taxon>
    </lineage>
</organism>
<sequence length="384" mass="43459">MSSATSGEYWLISVPGEKGANDAWDKLNRSTGNTSTNSKYLIPDLKVGTLDQLVGLSDDLSKLDTSAEAVIRKLVQYFTEVLEEDKSKIAENLVIGNKDMKTYVTKFQWEGAKYPLKQSLKVLSEIIGKQISQIDNDLKVKSLTYNNLKNALASMDRKTVGSLLTKDLADLVKADDFVLNSEYLQTVIVVVPKISVKEWEQKYATLSSMVVPGSSKLLTEEGEHALYTVTLFKKVIDEFKNTARENKFIVRDFVYDEETLKAGRTERDKLMAEKQRQYAPLIRWLKINFGEIFAAYIHIKALRVFVESVLRYGLPVNFQAAVIEPAKGQQKKLRQELHKLYIHLDGSAAGPIDTLEDSPALMSLGVNEYYPYVFFKLNIDFLNK</sequence>
<gene>
    <name evidence="8" type="primary">vha-11</name>
    <name evidence="8" type="ORF">Y38F2AL.3</name>
</gene>
<protein>
    <recommendedName>
        <fullName>V-type proton ATPase subunit C</fullName>
        <shortName>V-ATPase subunit C</shortName>
    </recommendedName>
    <alternativeName>
        <fullName>Vacuolar proton pump subunit C</fullName>
    </alternativeName>
</protein>
<evidence type="ECO:0000250" key="1">
    <source>
        <dbReference type="UniProtKB" id="P21282"/>
    </source>
</evidence>
<evidence type="ECO:0000250" key="2">
    <source>
        <dbReference type="UniProtKB" id="P31412"/>
    </source>
</evidence>
<evidence type="ECO:0000269" key="3">
    <source>
    </source>
</evidence>
<evidence type="ECO:0000269" key="4">
    <source>
    </source>
</evidence>
<evidence type="ECO:0000269" key="5">
    <source>
    </source>
</evidence>
<evidence type="ECO:0000305" key="6"/>
<evidence type="ECO:0000305" key="7">
    <source>
    </source>
</evidence>
<evidence type="ECO:0000312" key="8">
    <source>
        <dbReference type="WormBase" id="Y38F2AL.3a"/>
    </source>
</evidence>
<evidence type="ECO:0000312" key="9">
    <source>
        <dbReference type="WormBase" id="Y38F2AL.3b"/>
    </source>
</evidence>
<comment type="function">
    <text evidence="1 2 3 7">Subunit of the V1 complex of vacuolar(H+)-ATPase (V-ATPase), a multisubunit enzyme composed of a peripheral complex (V1) that hydrolyzes ATP and a membrane integral complex (V0) that translocates protons (Probable). V-ATPase is responsible for acidifying and maintaining the pH of intracellular compartments and in some cell types, is targeted to the plasma membrane, where it is responsible for acidifying the extracellular environment (By similarity). Subunit C is necessary for the assembly of the catalytic sector of the enzyme and is likely to have a specific function in its catalytic activity (By similarity). Has roles in embryogenesis and ovulation (PubMed:10846178).</text>
</comment>
<comment type="subunit">
    <text evidence="1 4">V-ATPase is a heteromultimeric enzyme made up of two complexes: the ATP-hydrolytic V1 complex and the proton translocation V0 complex (By similarity). The V1 complex consists of three catalytic AB heterodimers that form a heterohexamer, three peripheral stalks each consisting of EG heterodimers, one central rotor including subunits D and F, and the regulatory subunits C and H (By similarity). The proton translocation complex V0 consists of the proton transport subunit a, a ring of proteolipid subunits c9c'', rotary subunit d, subunits e and f, and the accessory subunits vah-19/Ac45 and vah-20/PRR (By similarity). Interacts with V-type proton ATPase subunits a1 unc-32, a2 vha-5 and a3 vha-6 (PubMed:11441002).</text>
</comment>
<comment type="subcellular location">
    <subcellularLocation>
        <location evidence="3">Cytoplasm</location>
    </subcellularLocation>
    <subcellularLocation>
        <location evidence="4">Membrane</location>
        <topology evidence="6">Peripheral membrane protein</topology>
    </subcellularLocation>
    <text evidence="3">In embryonic cells, detected in dot-like structures in the cytoplasm around the nuclei.</text>
</comment>
<comment type="alternative products">
    <event type="alternative splicing"/>
    <isoform>
        <id>Q9XXU9-1</id>
        <name evidence="8">a</name>
        <sequence type="displayed"/>
    </isoform>
    <isoform>
        <id>Q9XXU9-2</id>
        <name evidence="9">b</name>
        <sequence type="described" ref="VSP_023136 VSP_023137"/>
    </isoform>
</comment>
<comment type="tissue specificity">
    <text evidence="3 5">Expressed ubiquitously; higher levels are found in gastrointestinal and hypodermal cells, as well as H-shaped excretory cell.</text>
</comment>
<comment type="disruption phenotype">
    <text evidence="3">Worms display embryonic lethality. When vha-11 is silenced in adults, they are able to produce eggs but egg numbers gradually decrease and worms become sterile after 24 hours. This sterility continues for about 4 days and then viable eggs are produced again.</text>
</comment>
<comment type="miscellaneous">
    <text>Vha-11 and vha-3 are transcribed on a dicistronic transcript where vha-3 is the upstream transcript and vha-11 the downstream.</text>
</comment>
<comment type="similarity">
    <text evidence="6">Belongs to the V-ATPase C subunit family.</text>
</comment>
<dbReference type="EMBL" id="AB009567">
    <property type="protein sequence ID" value="BAA75067.1"/>
    <property type="molecule type" value="mRNA"/>
</dbReference>
<dbReference type="EMBL" id="BX284604">
    <property type="protein sequence ID" value="CCD66967.1"/>
    <property type="molecule type" value="Genomic_DNA"/>
</dbReference>
<dbReference type="EMBL" id="BX284604">
    <property type="protein sequence ID" value="CCD66968.1"/>
    <property type="molecule type" value="Genomic_DNA"/>
</dbReference>
<dbReference type="PIR" id="T37271">
    <property type="entry name" value="T37271"/>
</dbReference>
<dbReference type="RefSeq" id="NP_001023451.1">
    <molecule id="Q9XXU9-1"/>
    <property type="nucleotide sequence ID" value="NM_001028280.6"/>
</dbReference>
<dbReference type="RefSeq" id="NP_001023452.1">
    <property type="nucleotide sequence ID" value="NM_001028281.3"/>
</dbReference>
<dbReference type="RefSeq" id="NP_001367641.1">
    <molecule id="Q9XXU9-2"/>
    <property type="nucleotide sequence ID" value="NM_001380087.1"/>
</dbReference>
<dbReference type="SMR" id="Q9XXU9"/>
<dbReference type="BioGRID" id="42169">
    <property type="interactions" value="24"/>
</dbReference>
<dbReference type="FunCoup" id="Q9XXU9">
    <property type="interactions" value="1421"/>
</dbReference>
<dbReference type="STRING" id="6239.Y38F2AL.3a.1"/>
<dbReference type="TCDB" id="3.A.2.2.7">
    <property type="family name" value="the h+- or na+-translocating f-type, v-type and a-type atpase (f-atpase) superfamily"/>
</dbReference>
<dbReference type="PaxDb" id="6239-Y38F2AL.3a"/>
<dbReference type="PeptideAtlas" id="Q9XXU9"/>
<dbReference type="EnsemblMetazoa" id="Y38F2AL.3a.1">
    <molecule id="Q9XXU9-1"/>
    <property type="protein sequence ID" value="Y38F2AL.3a.1"/>
    <property type="gene ID" value="WBGene00006920"/>
</dbReference>
<dbReference type="EnsemblMetazoa" id="Y38F2AL.3b.1">
    <molecule id="Q9XXU9-2"/>
    <property type="protein sequence ID" value="Y38F2AL.3b.1"/>
    <property type="gene ID" value="WBGene00006920"/>
</dbReference>
<dbReference type="GeneID" id="177017"/>
<dbReference type="KEGG" id="cel:CELE_Y38F2AL.3"/>
<dbReference type="UCSC" id="Y38F2AL.3a">
    <molecule id="Q9XXU9-1"/>
    <property type="organism name" value="c. elegans"/>
</dbReference>
<dbReference type="AGR" id="WB:WBGene00006920"/>
<dbReference type="CTD" id="177017"/>
<dbReference type="WormBase" id="Y38F2AL.3a">
    <molecule id="Q9XXU9-1"/>
    <property type="protein sequence ID" value="CE29997"/>
    <property type="gene ID" value="WBGene00006920"/>
    <property type="gene designation" value="vha-11"/>
</dbReference>
<dbReference type="WormBase" id="Y38F2AL.3b">
    <molecule id="Q9XXU9-2"/>
    <property type="protein sequence ID" value="CE38743"/>
    <property type="gene ID" value="WBGene00006920"/>
    <property type="gene designation" value="vha-11"/>
</dbReference>
<dbReference type="eggNOG" id="KOG2909">
    <property type="taxonomic scope" value="Eukaryota"/>
</dbReference>
<dbReference type="GeneTree" id="ENSGT00390000004263"/>
<dbReference type="HOGENOM" id="CLU_017554_3_0_1"/>
<dbReference type="InParanoid" id="Q9XXU9"/>
<dbReference type="OMA" id="VMIWIHV"/>
<dbReference type="OrthoDB" id="6605928at2759"/>
<dbReference type="PhylomeDB" id="Q9XXU9"/>
<dbReference type="Reactome" id="R-CEL-1222556">
    <property type="pathway name" value="ROS and RNS production in phagocytes"/>
</dbReference>
<dbReference type="Reactome" id="R-CEL-77387">
    <property type="pathway name" value="Insulin receptor recycling"/>
</dbReference>
<dbReference type="Reactome" id="R-CEL-917977">
    <property type="pathway name" value="Transferrin endocytosis and recycling"/>
</dbReference>
<dbReference type="Reactome" id="R-CEL-9639288">
    <property type="pathway name" value="Amino acids regulate mTORC1"/>
</dbReference>
<dbReference type="Reactome" id="R-CEL-983712">
    <property type="pathway name" value="Ion channel transport"/>
</dbReference>
<dbReference type="PRO" id="PR:Q9XXU9"/>
<dbReference type="Proteomes" id="UP000001940">
    <property type="component" value="Chromosome IV"/>
</dbReference>
<dbReference type="Bgee" id="WBGene00006920">
    <property type="expression patterns" value="Expressed in larva and 4 other cell types or tissues"/>
</dbReference>
<dbReference type="GO" id="GO:0043229">
    <property type="term" value="C:intracellular organelle"/>
    <property type="evidence" value="ECO:0000314"/>
    <property type="project" value="WormBase"/>
</dbReference>
<dbReference type="GO" id="GO:0016471">
    <property type="term" value="C:vacuolar proton-transporting V-type ATPase complex"/>
    <property type="evidence" value="ECO:0000303"/>
    <property type="project" value="UniProtKB"/>
</dbReference>
<dbReference type="GO" id="GO:0000221">
    <property type="term" value="C:vacuolar proton-transporting V-type ATPase, V1 domain"/>
    <property type="evidence" value="ECO:0000318"/>
    <property type="project" value="GO_Central"/>
</dbReference>
<dbReference type="GO" id="GO:0016787">
    <property type="term" value="F:hydrolase activity"/>
    <property type="evidence" value="ECO:0000303"/>
    <property type="project" value="UniProtKB"/>
</dbReference>
<dbReference type="GO" id="GO:0015078">
    <property type="term" value="F:proton transmembrane transporter activity"/>
    <property type="evidence" value="ECO:0000303"/>
    <property type="project" value="UniProtKB"/>
</dbReference>
<dbReference type="GO" id="GO:0046961">
    <property type="term" value="F:proton-transporting ATPase activity, rotational mechanism"/>
    <property type="evidence" value="ECO:0000318"/>
    <property type="project" value="GO_Central"/>
</dbReference>
<dbReference type="GO" id="GO:0009792">
    <property type="term" value="P:embryo development ending in birth or egg hatching"/>
    <property type="evidence" value="ECO:0000315"/>
    <property type="project" value="UniProtKB"/>
</dbReference>
<dbReference type="GO" id="GO:0030728">
    <property type="term" value="P:ovulation"/>
    <property type="evidence" value="ECO:0000315"/>
    <property type="project" value="UniProtKB"/>
</dbReference>
<dbReference type="CDD" id="cd14785">
    <property type="entry name" value="V-ATPase_C"/>
    <property type="match status" value="1"/>
</dbReference>
<dbReference type="FunFam" id="3.30.70.100:FF:000002">
    <property type="entry name" value="V-type proton ATPase subunit C"/>
    <property type="match status" value="1"/>
</dbReference>
<dbReference type="Gene3D" id="3.30.70.100">
    <property type="match status" value="1"/>
</dbReference>
<dbReference type="Gene3D" id="1.20.1460.10">
    <property type="entry name" value="subunit c (vma5p) of the yeast v-atpase, domain 2"/>
    <property type="match status" value="1"/>
</dbReference>
<dbReference type="Gene3D" id="3.30.70.1180">
    <property type="entry name" value="Vacuolar atp synthase subunit c, domain 1"/>
    <property type="match status" value="1"/>
</dbReference>
<dbReference type="InterPro" id="IPR004907">
    <property type="entry name" value="ATPase_V1-cplx_csu"/>
</dbReference>
<dbReference type="InterPro" id="IPR036132">
    <property type="entry name" value="Vac_ATP_synth_c_sf"/>
</dbReference>
<dbReference type="PANTHER" id="PTHR10137">
    <property type="entry name" value="V-TYPE PROTON ATPASE SUBUNIT C"/>
    <property type="match status" value="1"/>
</dbReference>
<dbReference type="PANTHER" id="PTHR10137:SF0">
    <property type="entry name" value="V-TYPE PROTON ATPASE SUBUNIT C"/>
    <property type="match status" value="1"/>
</dbReference>
<dbReference type="Pfam" id="PF03223">
    <property type="entry name" value="V-ATPase_C"/>
    <property type="match status" value="1"/>
</dbReference>
<dbReference type="SUPFAM" id="SSF118203">
    <property type="entry name" value="Vacuolar ATP synthase subunit C"/>
    <property type="match status" value="1"/>
</dbReference>
<feature type="chain" id="PRO_0000209351" description="V-type proton ATPase subunit C">
    <location>
        <begin position="1"/>
        <end position="384"/>
    </location>
</feature>
<feature type="splice variant" id="VSP_023136" description="In isoform b." evidence="6">
    <original>KDMKTYVTKFQWEGAKYPLKQSLKVLSEIIGKQISQ</original>
    <variation>RHEDVRDEIPMGRCQISTETIVESAQRDYWQTNQPD</variation>
    <location>
        <begin position="98"/>
        <end position="133"/>
    </location>
</feature>
<feature type="splice variant" id="VSP_023137" description="In isoform b." evidence="6">
    <location>
        <begin position="134"/>
        <end position="384"/>
    </location>
</feature>
<keyword id="KW-0025">Alternative splicing</keyword>
<keyword id="KW-0963">Cytoplasm</keyword>
<keyword id="KW-0217">Developmental protein</keyword>
<keyword id="KW-0375">Hydrogen ion transport</keyword>
<keyword id="KW-0406">Ion transport</keyword>
<keyword id="KW-0472">Membrane</keyword>
<keyword id="KW-1185">Reference proteome</keyword>
<keyword id="KW-0813">Transport</keyword>
<name>VATC_CAEEL</name>
<proteinExistence type="evidence at protein level"/>
<reference key="1">
    <citation type="journal article" date="1998" name="J. Biol. Chem.">
        <title>Multiple genes for vacuolar-type ATPase proteolipids in Caenorhabditis elegans: a new gene, vha-3, has a distinct cell-specific distribution.</title>
        <authorList>
            <person name="Oka T."/>
            <person name="Yamamoto R."/>
            <person name="Futai M."/>
        </authorList>
    </citation>
    <scope>NUCLEOTIDE SEQUENCE [MRNA] (ISOFORM A)</scope>
    <scope>FUNCTION</scope>
    <scope>TISSUE SPECIFICITY</scope>
</reference>
<reference key="2">
    <citation type="journal article" date="1998" name="Science">
        <title>Genome sequence of the nematode C. elegans: a platform for investigating biology.</title>
        <authorList>
            <consortium name="The C. elegans sequencing consortium"/>
        </authorList>
    </citation>
    <scope>NUCLEOTIDE SEQUENCE [LARGE SCALE GENOMIC DNA]</scope>
    <scope>ALTERNATIVE SPLICING</scope>
    <source>
        <strain>Bristol N2</strain>
    </source>
</reference>
<reference key="3">
    <citation type="journal article" date="2000" name="J. Biol. Chem.">
        <title>Requirement of V-ATPase for ovulation and embryogenesis in Caenorhabditis elegans.</title>
        <authorList>
            <person name="Oka T."/>
            <person name="Futai M."/>
        </authorList>
    </citation>
    <scope>FUNCTION</scope>
    <scope>SUBCELLULAR LOCATION</scope>
    <scope>TISSUE SPECIFICITY</scope>
    <scope>DISRUPTION PHENOTYPE</scope>
</reference>
<reference key="4">
    <citation type="journal article" date="2001" name="J. Biol. Chem.">
        <title>Four subunit a isoforms of Caenorhabditis elegans vacuolar H+-ATPase. Cell-specific expression during development.</title>
        <authorList>
            <person name="Oka T."/>
            <person name="Toyomura T."/>
            <person name="Honjo K."/>
            <person name="Wada Y."/>
            <person name="Futai M."/>
        </authorList>
    </citation>
    <scope>INTERACTION WITH VHA-5; VHA-6 AND UNC-32</scope>
    <scope>SUBCELLULAR LOCATION</scope>
</reference>
<accession>Q9XXU9</accession>
<accession>Q869J4</accession>
<accession>Q9N421</accession>